<dbReference type="EC" id="2.4.1.43" evidence="6"/>
<dbReference type="EMBL" id="KY906027">
    <property type="protein sequence ID" value="ARJ31391.1"/>
    <property type="molecule type" value="mRNA"/>
</dbReference>
<dbReference type="EMBL" id="AC026238">
    <property type="protein sequence ID" value="AAF98416.1"/>
    <property type="status" value="ALT_SEQ"/>
    <property type="molecule type" value="Genomic_DNA"/>
</dbReference>
<dbReference type="EMBL" id="CP002684">
    <property type="protein sequence ID" value="AEE29731.1"/>
    <property type="molecule type" value="Genomic_DNA"/>
</dbReference>
<dbReference type="EMBL" id="AY050967">
    <property type="protein sequence ID" value="AAK93644.1"/>
    <property type="molecule type" value="mRNA"/>
</dbReference>
<dbReference type="EMBL" id="AY062444">
    <property type="protein sequence ID" value="AAL32522.1"/>
    <property type="molecule type" value="mRNA"/>
</dbReference>
<dbReference type="EMBL" id="BT029514">
    <property type="protein sequence ID" value="ABL66770.1"/>
    <property type="status" value="ALT_FRAME"/>
    <property type="molecule type" value="mRNA"/>
</dbReference>
<dbReference type="PIR" id="D86319">
    <property type="entry name" value="D86319"/>
</dbReference>
<dbReference type="RefSeq" id="NP_564057.4">
    <property type="nucleotide sequence ID" value="NM_101716.7"/>
</dbReference>
<dbReference type="SMR" id="Q949Q1"/>
<dbReference type="FunCoup" id="Q949Q1">
    <property type="interactions" value="1416"/>
</dbReference>
<dbReference type="STRING" id="3702.Q949Q1"/>
<dbReference type="CAZy" id="GT8">
    <property type="family name" value="Glycosyltransferase Family 8"/>
</dbReference>
<dbReference type="GlyCosmos" id="Q949Q1">
    <property type="glycosylation" value="6 sites, No reported glycans"/>
</dbReference>
<dbReference type="GlyGen" id="Q949Q1">
    <property type="glycosylation" value="6 sites"/>
</dbReference>
<dbReference type="PaxDb" id="3702-AT1G18580.1"/>
<dbReference type="ProteomicsDB" id="224292"/>
<dbReference type="EnsemblPlants" id="AT1G18580.1">
    <property type="protein sequence ID" value="AT1G18580.1"/>
    <property type="gene ID" value="AT1G18580"/>
</dbReference>
<dbReference type="GeneID" id="838439"/>
<dbReference type="Gramene" id="AT1G18580.1">
    <property type="protein sequence ID" value="AT1G18580.1"/>
    <property type="gene ID" value="AT1G18580"/>
</dbReference>
<dbReference type="KEGG" id="ath:AT1G18580"/>
<dbReference type="Araport" id="AT1G18580"/>
<dbReference type="TAIR" id="AT1G18580">
    <property type="gene designation" value="GAUT11"/>
</dbReference>
<dbReference type="eggNOG" id="ENOG502QRMA">
    <property type="taxonomic scope" value="Eukaryota"/>
</dbReference>
<dbReference type="HOGENOM" id="CLU_010770_5_0_1"/>
<dbReference type="InParanoid" id="Q949Q1"/>
<dbReference type="OMA" id="HEDHVEQ"/>
<dbReference type="OrthoDB" id="411524at2759"/>
<dbReference type="PhylomeDB" id="Q949Q1"/>
<dbReference type="UniPathway" id="UPA00845"/>
<dbReference type="PRO" id="PR:Q949Q1"/>
<dbReference type="Proteomes" id="UP000006548">
    <property type="component" value="Chromosome 1"/>
</dbReference>
<dbReference type="ExpressionAtlas" id="Q949Q1">
    <property type="expression patterns" value="baseline and differential"/>
</dbReference>
<dbReference type="GO" id="GO:0005794">
    <property type="term" value="C:Golgi apparatus"/>
    <property type="evidence" value="ECO:0000314"/>
    <property type="project" value="TAIR"/>
</dbReference>
<dbReference type="GO" id="GO:0000137">
    <property type="term" value="C:Golgi cis cisterna"/>
    <property type="evidence" value="ECO:0007005"/>
    <property type="project" value="TAIR"/>
</dbReference>
<dbReference type="GO" id="GO:0000139">
    <property type="term" value="C:Golgi membrane"/>
    <property type="evidence" value="ECO:0007669"/>
    <property type="project" value="UniProtKB-SubCell"/>
</dbReference>
<dbReference type="GO" id="GO:0016757">
    <property type="term" value="F:glycosyltransferase activity"/>
    <property type="evidence" value="ECO:0000314"/>
    <property type="project" value="TAIR"/>
</dbReference>
<dbReference type="GO" id="GO:0047262">
    <property type="term" value="F:polygalacturonate 4-alpha-galacturonosyltransferase activity"/>
    <property type="evidence" value="ECO:0000314"/>
    <property type="project" value="TAIR"/>
</dbReference>
<dbReference type="GO" id="GO:0052546">
    <property type="term" value="P:cell wall pectin metabolic process"/>
    <property type="evidence" value="ECO:0000316"/>
    <property type="project" value="TAIR"/>
</dbReference>
<dbReference type="GO" id="GO:0010442">
    <property type="term" value="P:guard cell morphogenesis"/>
    <property type="evidence" value="ECO:0000316"/>
    <property type="project" value="TAIR"/>
</dbReference>
<dbReference type="GO" id="GO:0010192">
    <property type="term" value="P:mucilage biosynthetic process"/>
    <property type="evidence" value="ECO:0000315"/>
    <property type="project" value="TAIR"/>
</dbReference>
<dbReference type="GO" id="GO:0080001">
    <property type="term" value="P:mucilage extrusion from seed coat"/>
    <property type="evidence" value="ECO:0000315"/>
    <property type="project" value="TAIR"/>
</dbReference>
<dbReference type="GO" id="GO:0048358">
    <property type="term" value="P:mucilage pectin biosynthetic process"/>
    <property type="evidence" value="ECO:0000315"/>
    <property type="project" value="TAIR"/>
</dbReference>
<dbReference type="GO" id="GO:0010246">
    <property type="term" value="P:rhamnogalacturonan I biosynthetic process"/>
    <property type="evidence" value="ECO:0000315"/>
    <property type="project" value="TAIR"/>
</dbReference>
<dbReference type="CDD" id="cd06429">
    <property type="entry name" value="GT8_like_1"/>
    <property type="match status" value="1"/>
</dbReference>
<dbReference type="Gene3D" id="3.90.550.10">
    <property type="entry name" value="Spore Coat Polysaccharide Biosynthesis Protein SpsA, Chain A"/>
    <property type="match status" value="1"/>
</dbReference>
<dbReference type="InterPro" id="IPR029993">
    <property type="entry name" value="GAUT"/>
</dbReference>
<dbReference type="InterPro" id="IPR002495">
    <property type="entry name" value="Glyco_trans_8"/>
</dbReference>
<dbReference type="InterPro" id="IPR029044">
    <property type="entry name" value="Nucleotide-diphossugar_trans"/>
</dbReference>
<dbReference type="PANTHER" id="PTHR32116">
    <property type="entry name" value="GALACTURONOSYLTRANSFERASE 4-RELATED"/>
    <property type="match status" value="1"/>
</dbReference>
<dbReference type="PANTHER" id="PTHR32116:SF20">
    <property type="entry name" value="HEXOSYLTRANSFERASE GAUT11"/>
    <property type="match status" value="1"/>
</dbReference>
<dbReference type="Pfam" id="PF01501">
    <property type="entry name" value="Glyco_transf_8"/>
    <property type="match status" value="1"/>
</dbReference>
<dbReference type="SUPFAM" id="SSF53448">
    <property type="entry name" value="Nucleotide-diphospho-sugar transferases"/>
    <property type="match status" value="1"/>
</dbReference>
<accession>Q949Q1</accession>
<accession>A0A178WM53</accession>
<accession>A0A1W6AJX8</accession>
<accession>A1A6J4</accession>
<accession>Q9FZ79</accession>
<proteinExistence type="evidence at protein level"/>
<protein>
    <recommendedName>
        <fullName evidence="8">Hexosyltransferase GAUT11</fullName>
        <ecNumber evidence="6">2.4.1.43</ecNumber>
    </recommendedName>
    <alternativeName>
        <fullName evidence="7">Galacturonosyltransferase 11</fullName>
    </alternativeName>
</protein>
<reference key="1">
    <citation type="submission" date="2017-04" db="EMBL/GenBank/DDBJ databases">
        <title>Arabidopsis glycosyltransfereases: an update.</title>
        <authorList>
            <person name="Zeng W."/>
            <person name="Gluza P."/>
            <person name="Heazlewood J."/>
        </authorList>
    </citation>
    <scope>NUCLEOTIDE SEQUENCE [MRNA]</scope>
    <source>
        <strain>cv. Columbia</strain>
    </source>
</reference>
<reference key="2">
    <citation type="journal article" date="2000" name="Nature">
        <title>Sequence and analysis of chromosome 1 of the plant Arabidopsis thaliana.</title>
        <authorList>
            <person name="Theologis A."/>
            <person name="Ecker J.R."/>
            <person name="Palm C.J."/>
            <person name="Federspiel N.A."/>
            <person name="Kaul S."/>
            <person name="White O."/>
            <person name="Alonso J."/>
            <person name="Altafi H."/>
            <person name="Araujo R."/>
            <person name="Bowman C.L."/>
            <person name="Brooks S.Y."/>
            <person name="Buehler E."/>
            <person name="Chan A."/>
            <person name="Chao Q."/>
            <person name="Chen H."/>
            <person name="Cheuk R.F."/>
            <person name="Chin C.W."/>
            <person name="Chung M.K."/>
            <person name="Conn L."/>
            <person name="Conway A.B."/>
            <person name="Conway A.R."/>
            <person name="Creasy T.H."/>
            <person name="Dewar K."/>
            <person name="Dunn P."/>
            <person name="Etgu P."/>
            <person name="Feldblyum T.V."/>
            <person name="Feng J.-D."/>
            <person name="Fong B."/>
            <person name="Fujii C.Y."/>
            <person name="Gill J.E."/>
            <person name="Goldsmith A.D."/>
            <person name="Haas B."/>
            <person name="Hansen N.F."/>
            <person name="Hughes B."/>
            <person name="Huizar L."/>
            <person name="Hunter J.L."/>
            <person name="Jenkins J."/>
            <person name="Johnson-Hopson C."/>
            <person name="Khan S."/>
            <person name="Khaykin E."/>
            <person name="Kim C.J."/>
            <person name="Koo H.L."/>
            <person name="Kremenetskaia I."/>
            <person name="Kurtz D.B."/>
            <person name="Kwan A."/>
            <person name="Lam B."/>
            <person name="Langin-Hooper S."/>
            <person name="Lee A."/>
            <person name="Lee J.M."/>
            <person name="Lenz C.A."/>
            <person name="Li J.H."/>
            <person name="Li Y.-P."/>
            <person name="Lin X."/>
            <person name="Liu S.X."/>
            <person name="Liu Z.A."/>
            <person name="Luros J.S."/>
            <person name="Maiti R."/>
            <person name="Marziali A."/>
            <person name="Militscher J."/>
            <person name="Miranda M."/>
            <person name="Nguyen M."/>
            <person name="Nierman W.C."/>
            <person name="Osborne B.I."/>
            <person name="Pai G."/>
            <person name="Peterson J."/>
            <person name="Pham P.K."/>
            <person name="Rizzo M."/>
            <person name="Rooney T."/>
            <person name="Rowley D."/>
            <person name="Sakano H."/>
            <person name="Salzberg S.L."/>
            <person name="Schwartz J.R."/>
            <person name="Shinn P."/>
            <person name="Southwick A.M."/>
            <person name="Sun H."/>
            <person name="Tallon L.J."/>
            <person name="Tambunga G."/>
            <person name="Toriumi M.J."/>
            <person name="Town C.D."/>
            <person name="Utterback T."/>
            <person name="Van Aken S."/>
            <person name="Vaysberg M."/>
            <person name="Vysotskaia V.S."/>
            <person name="Walker M."/>
            <person name="Wu D."/>
            <person name="Yu G."/>
            <person name="Fraser C.M."/>
            <person name="Venter J.C."/>
            <person name="Davis R.W."/>
        </authorList>
    </citation>
    <scope>NUCLEOTIDE SEQUENCE [LARGE SCALE GENOMIC DNA]</scope>
    <source>
        <strain>cv. Columbia</strain>
    </source>
</reference>
<reference key="3">
    <citation type="journal article" date="2017" name="Plant J.">
        <title>Araport11: a complete reannotation of the Arabidopsis thaliana reference genome.</title>
        <authorList>
            <person name="Cheng C.Y."/>
            <person name="Krishnakumar V."/>
            <person name="Chan A.P."/>
            <person name="Thibaud-Nissen F."/>
            <person name="Schobel S."/>
            <person name="Town C.D."/>
        </authorList>
    </citation>
    <scope>GENOME REANNOTATION</scope>
    <source>
        <strain>cv. Columbia</strain>
    </source>
</reference>
<reference key="4">
    <citation type="journal article" date="2003" name="Science">
        <title>Empirical analysis of transcriptional activity in the Arabidopsis genome.</title>
        <authorList>
            <person name="Yamada K."/>
            <person name="Lim J."/>
            <person name="Dale J.M."/>
            <person name="Chen H."/>
            <person name="Shinn P."/>
            <person name="Palm C.J."/>
            <person name="Southwick A.M."/>
            <person name="Wu H.C."/>
            <person name="Kim C.J."/>
            <person name="Nguyen M."/>
            <person name="Pham P.K."/>
            <person name="Cheuk R.F."/>
            <person name="Karlin-Newmann G."/>
            <person name="Liu S.X."/>
            <person name="Lam B."/>
            <person name="Sakano H."/>
            <person name="Wu T."/>
            <person name="Yu G."/>
            <person name="Miranda M."/>
            <person name="Quach H.L."/>
            <person name="Tripp M."/>
            <person name="Chang C.H."/>
            <person name="Lee J.M."/>
            <person name="Toriumi M.J."/>
            <person name="Chan M.M."/>
            <person name="Tang C.C."/>
            <person name="Onodera C.S."/>
            <person name="Deng J.M."/>
            <person name="Akiyama K."/>
            <person name="Ansari Y."/>
            <person name="Arakawa T."/>
            <person name="Banh J."/>
            <person name="Banno F."/>
            <person name="Bowser L."/>
            <person name="Brooks S.Y."/>
            <person name="Carninci P."/>
            <person name="Chao Q."/>
            <person name="Choy N."/>
            <person name="Enju A."/>
            <person name="Goldsmith A.D."/>
            <person name="Gurjal M."/>
            <person name="Hansen N.F."/>
            <person name="Hayashizaki Y."/>
            <person name="Johnson-Hopson C."/>
            <person name="Hsuan V.W."/>
            <person name="Iida K."/>
            <person name="Karnes M."/>
            <person name="Khan S."/>
            <person name="Koesema E."/>
            <person name="Ishida J."/>
            <person name="Jiang P.X."/>
            <person name="Jones T."/>
            <person name="Kawai J."/>
            <person name="Kamiya A."/>
            <person name="Meyers C."/>
            <person name="Nakajima M."/>
            <person name="Narusaka M."/>
            <person name="Seki M."/>
            <person name="Sakurai T."/>
            <person name="Satou M."/>
            <person name="Tamse R."/>
            <person name="Vaysberg M."/>
            <person name="Wallender E.K."/>
            <person name="Wong C."/>
            <person name="Yamamura Y."/>
            <person name="Yuan S."/>
            <person name="Shinozaki K."/>
            <person name="Davis R.W."/>
            <person name="Theologis A."/>
            <person name="Ecker J.R."/>
        </authorList>
    </citation>
    <scope>NUCLEOTIDE SEQUENCE [LARGE SCALE MRNA]</scope>
    <source>
        <strain>cv. Columbia</strain>
    </source>
</reference>
<reference key="5">
    <citation type="submission" date="2006-12" db="EMBL/GenBank/DDBJ databases">
        <title>Arabidopsis ORF clones.</title>
        <authorList>
            <person name="Bautista V.R."/>
            <person name="Kim C.J."/>
            <person name="Chen H."/>
            <person name="Quinitio C."/>
            <person name="Ecker J.R."/>
        </authorList>
    </citation>
    <scope>NUCLEOTIDE SEQUENCE [LARGE SCALE MRNA] OF 1-332</scope>
</reference>
<reference key="6">
    <citation type="journal article" date="2006" name="Proc. Natl. Acad. Sci. U.S.A.">
        <title>Functional identification of an Arabidopsis pectin biosynthetic homogalacturonan galacturonosyltransferase.</title>
        <authorList>
            <person name="Sterling J.D."/>
            <person name="Atmodjo M.A."/>
            <person name="Inwood S.E."/>
            <person name="Kumar Kolli V.S."/>
            <person name="Quigley H.F."/>
            <person name="Hahn M.G."/>
            <person name="Mohnen D."/>
        </authorList>
    </citation>
    <scope>GENE FAMILY</scope>
    <scope>NOMENCLATURE</scope>
</reference>
<reference key="7">
    <citation type="journal article" date="2009" name="Mol. Plant">
        <title>Arabidopsis thaliana T-DNA mutants implicate GAUT genes in the biosynthesis of pectin and xylan in cell walls and seed testa.</title>
        <authorList>
            <person name="Caffall K.H."/>
            <person name="Pattathil S."/>
            <person name="Phillips S.E."/>
            <person name="Hahn M.G."/>
            <person name="Mohnen D."/>
        </authorList>
    </citation>
    <scope>TISSUE SPECIFICITY</scope>
</reference>
<reference key="8">
    <citation type="journal article" date="2018" name="Plant Physiol.">
        <title>Identification of key enzymes for pectin synthesis in seed mucilage.</title>
        <authorList>
            <person name="Voiniciuc C."/>
            <person name="Engle K.A."/>
            <person name="Guenl M."/>
            <person name="Dieluweit S."/>
            <person name="Schmidt M.H."/>
            <person name="Yang J.Y."/>
            <person name="Moremen K.W."/>
            <person name="Mohnen D."/>
            <person name="Usadel B."/>
        </authorList>
    </citation>
    <scope>FUNCTION</scope>
    <scope>DISRUPTION PHENOTYPE</scope>
    <scope>SUBUNIT</scope>
    <scope>SUBCELLULAR LOCATION</scope>
    <scope>CATALYTIC ACTIVITY</scope>
    <scope>PATHWAY</scope>
    <scope>TISSUE SPECIFICITY</scope>
    <scope>DEVELOPMENTAL STAGE</scope>
</reference>
<evidence type="ECO:0000250" key="1"/>
<evidence type="ECO:0000250" key="2">
    <source>
        <dbReference type="UniProtKB" id="Q9LE59"/>
    </source>
</evidence>
<evidence type="ECO:0000255" key="3"/>
<evidence type="ECO:0000255" key="4">
    <source>
        <dbReference type="PROSITE-ProRule" id="PRU00498"/>
    </source>
</evidence>
<evidence type="ECO:0000269" key="5">
    <source>
    </source>
</evidence>
<evidence type="ECO:0000269" key="6">
    <source>
    </source>
</evidence>
<evidence type="ECO:0000303" key="7">
    <source>
    </source>
</evidence>
<evidence type="ECO:0000305" key="8"/>
<evidence type="ECO:0000312" key="9">
    <source>
        <dbReference type="Araport" id="AT1G18580"/>
    </source>
</evidence>
<evidence type="ECO:0000312" key="10">
    <source>
        <dbReference type="EMBL" id="AAF98416.1"/>
    </source>
</evidence>
<feature type="chain" id="PRO_0000392561" description="Hexosyltransferase GAUT11">
    <location>
        <begin position="1"/>
        <end position="537"/>
    </location>
</feature>
<feature type="topological domain" description="Cytoplasmic" evidence="8">
    <location>
        <begin position="1"/>
        <end position="16"/>
    </location>
</feature>
<feature type="transmembrane region" description="Helical; Signal-anchor for type II membrane protein" evidence="3">
    <location>
        <begin position="17"/>
        <end position="37"/>
    </location>
</feature>
<feature type="topological domain" description="Lumenal" evidence="8">
    <location>
        <begin position="38"/>
        <end position="537"/>
    </location>
</feature>
<feature type="glycosylation site" description="N-linked (GlcNAc...) asparagine" evidence="4">
    <location>
        <position position="66"/>
    </location>
</feature>
<feature type="glycosylation site" description="N-linked (GlcNAc...) asparagine" evidence="4">
    <location>
        <position position="247"/>
    </location>
</feature>
<feature type="glycosylation site" description="N-linked (GlcNAc...) asparagine" evidence="4">
    <location>
        <position position="299"/>
    </location>
</feature>
<feature type="glycosylation site" description="N-linked (GlcNAc...) asparagine" evidence="4">
    <location>
        <position position="403"/>
    </location>
</feature>
<feature type="glycosylation site" description="N-linked (GlcNAc...) asparagine" evidence="4">
    <location>
        <position position="436"/>
    </location>
</feature>
<feature type="glycosylation site" description="N-linked (GlcNAc...) asparagine" evidence="4">
    <location>
        <position position="525"/>
    </location>
</feature>
<keyword id="KW-0961">Cell wall biogenesis/degradation</keyword>
<keyword id="KW-0325">Glycoprotein</keyword>
<keyword id="KW-0328">Glycosyltransferase</keyword>
<keyword id="KW-0333">Golgi apparatus</keyword>
<keyword id="KW-0472">Membrane</keyword>
<keyword id="KW-1185">Reference proteome</keyword>
<keyword id="KW-0735">Signal-anchor</keyword>
<keyword id="KW-0808">Transferase</keyword>
<keyword id="KW-0812">Transmembrane</keyword>
<keyword id="KW-1133">Transmembrane helix</keyword>
<organism>
    <name type="scientific">Arabidopsis thaliana</name>
    <name type="common">Mouse-ear cress</name>
    <dbReference type="NCBI Taxonomy" id="3702"/>
    <lineage>
        <taxon>Eukaryota</taxon>
        <taxon>Viridiplantae</taxon>
        <taxon>Streptophyta</taxon>
        <taxon>Embryophyta</taxon>
        <taxon>Tracheophyta</taxon>
        <taxon>Spermatophyta</taxon>
        <taxon>Magnoliopsida</taxon>
        <taxon>eudicotyledons</taxon>
        <taxon>Gunneridae</taxon>
        <taxon>Pentapetalae</taxon>
        <taxon>rosids</taxon>
        <taxon>malvids</taxon>
        <taxon>Brassicales</taxon>
        <taxon>Brassicaceae</taxon>
        <taxon>Camelineae</taxon>
        <taxon>Arabidopsis</taxon>
    </lineage>
</organism>
<comment type="function">
    <text evidence="2 6">Glycosyltransferase involved in pectin and/or xylans biosynthesis in cell walls (By similarity). Required for the biosynthesis of pectin in seed coat epidermal (SCE) cells (PubMed:30228108). Collaboratively with MUCI70, essential for the accumulation of seed mucilage, a gelatinous wall rich in unbranched rhamnogalacturonan I (RG I), and for shaping the surface morphology of seeds (PubMed:30228108). Catalyzes homogalacturonan (HG) elongation by acting as an HG alpha-1,4 galacturonic acid transferase (PubMed:30228108).</text>
</comment>
<comment type="catalytic activity">
    <reaction evidence="6">
        <text>[(1-&gt;4)-alpha-D-galacturonosyl](n) + UDP-alpha-D-galacturonate = [(1-&gt;4)-alpha-D-galacturonosyl](n+1) + UDP + H(+)</text>
        <dbReference type="Rhea" id="RHEA:13573"/>
        <dbReference type="Rhea" id="RHEA-COMP:14570"/>
        <dbReference type="Rhea" id="RHEA-COMP:14571"/>
        <dbReference type="ChEBI" id="CHEBI:15378"/>
        <dbReference type="ChEBI" id="CHEBI:57635"/>
        <dbReference type="ChEBI" id="CHEBI:58223"/>
        <dbReference type="ChEBI" id="CHEBI:140523"/>
        <dbReference type="EC" id="2.4.1.43"/>
    </reaction>
    <physiologicalReaction direction="left-to-right" evidence="6">
        <dbReference type="Rhea" id="RHEA:13574"/>
    </physiologicalReaction>
</comment>
<comment type="pathway">
    <text evidence="6">Glycan metabolism; pectin biosynthesis.</text>
</comment>
<comment type="subunit">
    <text evidence="6">Monomer.</text>
</comment>
<comment type="subcellular location">
    <subcellularLocation>
        <location evidence="1">Golgi apparatus membrane</location>
        <topology evidence="3">Single-pass type II membrane protein</topology>
    </subcellularLocation>
</comment>
<comment type="tissue specificity">
    <text evidence="5 6">Expressed in roots, inflorescences, siliques, seeds, leaves and stems.</text>
</comment>
<comment type="developmental stage">
    <text evidence="6">Accumulates in developing seeds in siliques, mainly in the seed coat and, to a lesser extent, in the embryo.</text>
</comment>
<comment type="disruption phenotype">
    <text evidence="6">Strong reduction of seed mucilage accumulation, associated with reduced absolute levels of rhamnose (Rha), galacturonic acid (GalA) and xylose (Xyl) but increased absolute abundance of minor sugars (e.g. galactose (Gal), glucose (Glc) and mannose (Man)) (PubMed:30228108). The double mutant muci70-1 gaut11-3 is completely defective in seed mucilage production and exhibits a strong release of minor sugars in total mucilage extracts (PubMed:30228108).</text>
</comment>
<comment type="similarity">
    <text evidence="8">Belongs to the glycosyltransferase 8 family.</text>
</comment>
<comment type="sequence caution" evidence="8">
    <conflict type="erroneous gene model prediction">
        <sequence resource="EMBL-CDS" id="AAF98416"/>
    </conflict>
</comment>
<comment type="sequence caution" evidence="8">
    <conflict type="frameshift">
        <sequence resource="EMBL-CDS" id="ABL66770"/>
    </conflict>
</comment>
<sequence>MRRWPVDHRRRGRRRLSSWIWFLLGSFSVAGLVLFIVQHYHHQQDPSQLLLERDTRTEMVSPPHLNFTEEVTSASSFSRQLAEQMTLAKAYVFIAKEHNNLHLAWELSSKIRSCQLLLSKAAMRGQPISFDEAKPIITGLSALIYKAQDAHYDIATTMMTMKSHIQALEERANAATVQTTIFGQLVAEALPKSLHCLTIKLTSDWVTEPSRHELADENRNSPRLVDNNLYHFCIFSDNVIATSVVVNSTVSNADHPKQLVFHIVTNRVSYKAMQAWFLSNDFKGSAIEIRSVEEFSWLNASYSPVVKQLLDTDARAYYFGEQTSQDTISEPKVRNPKYLSLLNHLRFYIPEIYPQLEKIVFLDDDVVVQKDLTPLFSLDLHGNVNGAVETCLEAFHRYYKYLNFSNPLISSKFDPQACGWAFGMNVFDLIAWRNANVTARYHYWQDQNRERTLWKLGTLPPGLLSFYGLTEPLDRRWHVLGLGYDVNIDNRLIETAAVIHYNGNMKPWLKLAIGRYKPFWLKFLNSSHPYLQDCVTA</sequence>
<gene>
    <name evidence="7" type="primary">GAUT11</name>
    <name evidence="9" type="ordered locus">At1g18580</name>
    <name evidence="10" type="ORF">F25I16.8</name>
</gene>
<name>GAUTB_ARATH</name>